<evidence type="ECO:0000250" key="1"/>
<evidence type="ECO:0000250" key="2">
    <source>
        <dbReference type="UniProtKB" id="P02470"/>
    </source>
</evidence>
<evidence type="ECO:0000250" key="3">
    <source>
        <dbReference type="UniProtKB" id="P02489"/>
    </source>
</evidence>
<evidence type="ECO:0000255" key="4">
    <source>
        <dbReference type="PROSITE-ProRule" id="PRU00285"/>
    </source>
</evidence>
<evidence type="ECO:0000256" key="5">
    <source>
        <dbReference type="SAM" id="MobiDB-lite"/>
    </source>
</evidence>
<evidence type="ECO:0000269" key="6">
    <source>
    </source>
</evidence>
<comment type="function">
    <text evidence="3">Contributes to the transparency and refractive index of the lens. Acts as a chaperone, preventing aggregation of various proteins under a wide range of stress conditions. Required for the correct formation of lens intermediate filaments as part of a complex composed of BFSP1, BFSP2 and CRYAA.</text>
</comment>
<comment type="subunit">
    <text evidence="2 3">Heteromer composed of three CRYAA and one CRYAB subunits. Inter-subunit bridging via zinc ions enhances stability, which is crucial as there is no protein turn over in the lens. Can also form homodimers and homotetramers (dimers of dimers) which serve as the building blocks of homooligomers (By similarity). Within homooligomers, the zinc-binding motif is created from residues of 3 different molecules. His-100 and Glu-102 from one molecule are ligands of the zinc ion, and His-107 and His-154 residues from additional molecules complete the site with tetrahedral coordination geometry (By similarity). Part of a complex required for lens intermediate filament formation composed of BFSP1, BFSP2 and CRYAA (By similarity).</text>
</comment>
<comment type="subcellular location">
    <subcellularLocation>
        <location evidence="3">Cytoplasm</location>
    </subcellularLocation>
    <subcellularLocation>
        <location evidence="3">Nucleus</location>
    </subcellularLocation>
    <text evidence="3">Translocates to the nucleus during heat shock and resides in sub-nuclear structures known as SC35 speckles or nuclear splicing speckles.</text>
</comment>
<comment type="PTM">
    <text evidence="3">Acetylation at Lys-70 may increase chaperone activity.</text>
</comment>
<comment type="PTM">
    <text evidence="3">Undergoes age-dependent proteolytical cleavage at the C-terminus.</text>
</comment>
<comment type="miscellaneous">
    <text>The shorter form (residues 1-168) is probably the product of protein degradation.</text>
</comment>
<comment type="similarity">
    <text evidence="4">Belongs to the small heat shock protein (HSP20) family.</text>
</comment>
<gene>
    <name type="primary">CRYAA</name>
</gene>
<sequence>MDITIQHPWFKRALGSLYPSRLFDQFFGEGLFEYDLLPFLSSTISPYYRQSLFRTVLESGISEVRSDRDKFVIFLDVKHFSPEDLTVKVLDDFVEIHGKHSERQDDHGYISREFHRRYRLPSNVDQSAISCSLSADGMLTFSGPKIHSDMDASHSDRSIPVSREEKPTLAPSS</sequence>
<name>CRYAA_OSPRU</name>
<accession>P02502</accession>
<dbReference type="PIR" id="A02905">
    <property type="entry name" value="CYKGAA"/>
</dbReference>
<dbReference type="SMR" id="P02502"/>
<dbReference type="GlyCosmos" id="P02502">
    <property type="glycosylation" value="1 site, No reported glycans"/>
</dbReference>
<dbReference type="iPTMnet" id="P02502"/>
<dbReference type="GO" id="GO:0005737">
    <property type="term" value="C:cytoplasm"/>
    <property type="evidence" value="ECO:0000250"/>
    <property type="project" value="UniProtKB"/>
</dbReference>
<dbReference type="GO" id="GO:0005634">
    <property type="term" value="C:nucleus"/>
    <property type="evidence" value="ECO:0000250"/>
    <property type="project" value="UniProtKB"/>
</dbReference>
<dbReference type="GO" id="GO:0046872">
    <property type="term" value="F:metal ion binding"/>
    <property type="evidence" value="ECO:0007669"/>
    <property type="project" value="UniProtKB-KW"/>
</dbReference>
<dbReference type="GO" id="GO:0005212">
    <property type="term" value="F:structural constituent of eye lens"/>
    <property type="evidence" value="ECO:0007669"/>
    <property type="project" value="UniProtKB-KW"/>
</dbReference>
<dbReference type="GO" id="GO:0051082">
    <property type="term" value="F:unfolded protein binding"/>
    <property type="evidence" value="ECO:0007669"/>
    <property type="project" value="TreeGrafter"/>
</dbReference>
<dbReference type="GO" id="GO:0002088">
    <property type="term" value="P:lens development in camera-type eye"/>
    <property type="evidence" value="ECO:0007669"/>
    <property type="project" value="TreeGrafter"/>
</dbReference>
<dbReference type="GO" id="GO:0043066">
    <property type="term" value="P:negative regulation of apoptotic process"/>
    <property type="evidence" value="ECO:0007669"/>
    <property type="project" value="TreeGrafter"/>
</dbReference>
<dbReference type="GO" id="GO:0042026">
    <property type="term" value="P:protein refolding"/>
    <property type="evidence" value="ECO:0007669"/>
    <property type="project" value="TreeGrafter"/>
</dbReference>
<dbReference type="GO" id="GO:0009408">
    <property type="term" value="P:response to heat"/>
    <property type="evidence" value="ECO:0007669"/>
    <property type="project" value="TreeGrafter"/>
</dbReference>
<dbReference type="CDD" id="cd06497">
    <property type="entry name" value="ACD_alphaA-crystallin_HspB4"/>
    <property type="match status" value="1"/>
</dbReference>
<dbReference type="FunFam" id="2.60.40.790:FF:000008">
    <property type="entry name" value="Alpha-crystallin A chain"/>
    <property type="match status" value="1"/>
</dbReference>
<dbReference type="Gene3D" id="2.60.40.790">
    <property type="match status" value="1"/>
</dbReference>
<dbReference type="InterPro" id="IPR002068">
    <property type="entry name" value="A-crystallin/Hsp20_dom"/>
</dbReference>
<dbReference type="InterPro" id="IPR055269">
    <property type="entry name" value="Alpha-crystallin/HSP_16"/>
</dbReference>
<dbReference type="InterPro" id="IPR001436">
    <property type="entry name" value="Alpha-crystallin/sHSP_animal"/>
</dbReference>
<dbReference type="InterPro" id="IPR003090">
    <property type="entry name" value="Alpha-crystallin_N"/>
</dbReference>
<dbReference type="InterPro" id="IPR008978">
    <property type="entry name" value="HSP20-like_chaperone"/>
</dbReference>
<dbReference type="PANTHER" id="PTHR45640:SF14">
    <property type="entry name" value="ALPHA-CRYSTALLIN A CHAIN"/>
    <property type="match status" value="1"/>
</dbReference>
<dbReference type="PANTHER" id="PTHR45640">
    <property type="entry name" value="HEAT SHOCK PROTEIN HSP-12.2-RELATED"/>
    <property type="match status" value="1"/>
</dbReference>
<dbReference type="Pfam" id="PF00525">
    <property type="entry name" value="Crystallin"/>
    <property type="match status" value="1"/>
</dbReference>
<dbReference type="Pfam" id="PF00011">
    <property type="entry name" value="HSP20"/>
    <property type="match status" value="1"/>
</dbReference>
<dbReference type="PIRSF" id="PIRSF036514">
    <property type="entry name" value="Sm_HSP_B1"/>
    <property type="match status" value="1"/>
</dbReference>
<dbReference type="PRINTS" id="PR00299">
    <property type="entry name" value="ACRYSTALLIN"/>
</dbReference>
<dbReference type="SUPFAM" id="SSF49764">
    <property type="entry name" value="HSP20-like chaperones"/>
    <property type="match status" value="1"/>
</dbReference>
<dbReference type="PROSITE" id="PS01031">
    <property type="entry name" value="SHSP"/>
    <property type="match status" value="1"/>
</dbReference>
<feature type="chain" id="PRO_0000125868" description="Alpha-crystallin A chain">
    <location>
        <begin position="1"/>
        <end position="173"/>
    </location>
</feature>
<feature type="domain" description="sHSP" evidence="4">
    <location>
        <begin position="52"/>
        <end position="164"/>
    </location>
</feature>
<feature type="region of interest" description="Required for complex formation with BFSP1 and BFSP2" evidence="3">
    <location>
        <begin position="1"/>
        <end position="63"/>
    </location>
</feature>
<feature type="region of interest" description="Disordered" evidence="5">
    <location>
        <begin position="146"/>
        <end position="173"/>
    </location>
</feature>
<feature type="compositionally biased region" description="Basic and acidic residues" evidence="5">
    <location>
        <begin position="146"/>
        <end position="167"/>
    </location>
</feature>
<feature type="binding site" evidence="2">
    <location>
        <position position="100"/>
    </location>
    <ligand>
        <name>Zn(2+)</name>
        <dbReference type="ChEBI" id="CHEBI:29105"/>
        <label>1</label>
    </ligand>
</feature>
<feature type="binding site" evidence="2">
    <location>
        <position position="102"/>
    </location>
    <ligand>
        <name>Zn(2+)</name>
        <dbReference type="ChEBI" id="CHEBI:29105"/>
        <label>1</label>
    </ligand>
</feature>
<feature type="binding site" evidence="2">
    <location>
        <position position="107"/>
    </location>
    <ligand>
        <name>Zn(2+)</name>
        <dbReference type="ChEBI" id="CHEBI:29105"/>
        <label>2</label>
    </ligand>
</feature>
<feature type="binding site" evidence="2">
    <location>
        <position position="154"/>
    </location>
    <ligand>
        <name>Zn(2+)</name>
        <dbReference type="ChEBI" id="CHEBI:29105"/>
        <label>3</label>
    </ligand>
</feature>
<feature type="modified residue" description="N-acetylmethionine" evidence="6">
    <location>
        <position position="1"/>
    </location>
</feature>
<feature type="modified residue" description="Deamidated glutamine; partial" evidence="1">
    <location>
        <position position="6"/>
    </location>
</feature>
<feature type="modified residue" description="Phosphoserine" evidence="3">
    <location>
        <position position="45"/>
    </location>
</feature>
<feature type="modified residue" description="Deamidated glutamine; partial" evidence="1">
    <location>
        <position position="50"/>
    </location>
</feature>
<feature type="modified residue" description="N6-acetyllysine" evidence="3">
    <location>
        <position position="70"/>
    </location>
</feature>
<feature type="modified residue" description="N6-acetyllysine" evidence="3">
    <location>
        <position position="99"/>
    </location>
</feature>
<feature type="modified residue" description="Phosphoserine" evidence="2">
    <location>
        <position position="122"/>
    </location>
</feature>
<feature type="modified residue" description="Deamidated asparagine; partial" evidence="1">
    <location>
        <position position="123"/>
    </location>
</feature>
<feature type="glycosylation site" description="O-linked (GlcNAc) serine" evidence="1">
    <location>
        <position position="162"/>
    </location>
</feature>
<feature type="sequence variant">
    <location>
        <begin position="169"/>
        <end position="173"/>
    </location>
</feature>
<keyword id="KW-0007">Acetylation</keyword>
<keyword id="KW-0143">Chaperone</keyword>
<keyword id="KW-0963">Cytoplasm</keyword>
<keyword id="KW-0903">Direct protein sequencing</keyword>
<keyword id="KW-0273">Eye lens protein</keyword>
<keyword id="KW-0325">Glycoprotein</keyword>
<keyword id="KW-0479">Metal-binding</keyword>
<keyword id="KW-0488">Methylation</keyword>
<keyword id="KW-0539">Nucleus</keyword>
<keyword id="KW-0597">Phosphoprotein</keyword>
<keyword id="KW-0862">Zinc</keyword>
<protein>
    <recommendedName>
        <fullName>Alpha-crystallin A chain</fullName>
    </recommendedName>
</protein>
<proteinExistence type="evidence at protein level"/>
<reference key="1">
    <citation type="journal article" date="1976" name="Eur. J. Biochem.">
        <title>The amino-acid sequence of the alpha-crystallin A chains of red kangaroo and Virginia opossum.</title>
        <authorList>
            <person name="de Jong W.W."/>
            <person name="Terwindt E.C."/>
        </authorList>
    </citation>
    <scope>PROTEIN SEQUENCE</scope>
    <scope>ACETYLATION AT MET-1</scope>
</reference>
<organism>
    <name type="scientific">Osphranter rufus</name>
    <name type="common">Red kangaroo</name>
    <name type="synonym">Macropus rufus</name>
    <dbReference type="NCBI Taxonomy" id="9321"/>
    <lineage>
        <taxon>Eukaryota</taxon>
        <taxon>Metazoa</taxon>
        <taxon>Chordata</taxon>
        <taxon>Craniata</taxon>
        <taxon>Vertebrata</taxon>
        <taxon>Euteleostomi</taxon>
        <taxon>Mammalia</taxon>
        <taxon>Metatheria</taxon>
        <taxon>Diprotodontia</taxon>
        <taxon>Macropodidae</taxon>
        <taxon>Osphranter</taxon>
    </lineage>
</organism>